<sequence length="274" mass="31857">MRSNNNNPLTRDEILSRYFPQYRPAVAASQGLSGGSCIIAHDTHRVVLRRHHDPDAPPAHFLRHYRALSQLPASLAPRALFYTPGWMAVEYLHGVVNSALPDADELAALLYHLHQQPRFGWRIALSPLLAQYWSCCDPARRTPFWLRRLKQLQKNGEPRPLRLAPLHMDVHGDNIVLTSAGLRLIDWEYAGDGDIALELAAVWVEDERQHRQLANAYAACARIDARQLWRQIRLWHPWVIMLKAGWFEYRWRQTGEQQFIRLADETWRQLRMKG</sequence>
<reference key="1">
    <citation type="journal article" date="2009" name="PLoS ONE">
        <title>Salmonella paratyphi C: genetic divergence from Salmonella choleraesuis and pathogenic convergence with Salmonella typhi.</title>
        <authorList>
            <person name="Liu W.-Q."/>
            <person name="Feng Y."/>
            <person name="Wang Y."/>
            <person name="Zou Q.-H."/>
            <person name="Chen F."/>
            <person name="Guo J.-T."/>
            <person name="Peng Y.-H."/>
            <person name="Jin Y."/>
            <person name="Li Y.-G."/>
            <person name="Hu S.-N."/>
            <person name="Johnston R.N."/>
            <person name="Liu G.-R."/>
            <person name="Liu S.-L."/>
        </authorList>
    </citation>
    <scope>NUCLEOTIDE SEQUENCE [LARGE SCALE GENOMIC DNA]</scope>
    <source>
        <strain>RKS4594</strain>
    </source>
</reference>
<dbReference type="EC" id="2.7.1.89" evidence="1"/>
<dbReference type="EMBL" id="CP000857">
    <property type="protein sequence ID" value="ACN46643.1"/>
    <property type="molecule type" value="Genomic_DNA"/>
</dbReference>
<dbReference type="RefSeq" id="WP_001257334.1">
    <property type="nucleotide sequence ID" value="NC_012125.1"/>
</dbReference>
<dbReference type="SMR" id="C0Q785"/>
<dbReference type="KEGG" id="sei:SPC_2538"/>
<dbReference type="HOGENOM" id="CLU_055115_2_1_6"/>
<dbReference type="UniPathway" id="UPA00060">
    <property type="reaction ID" value="UER00596"/>
</dbReference>
<dbReference type="Proteomes" id="UP000001599">
    <property type="component" value="Chromosome"/>
</dbReference>
<dbReference type="GO" id="GO:0005524">
    <property type="term" value="F:ATP binding"/>
    <property type="evidence" value="ECO:0007669"/>
    <property type="project" value="UniProtKB-KW"/>
</dbReference>
<dbReference type="GO" id="GO:0019165">
    <property type="term" value="F:thiamine kinase activity"/>
    <property type="evidence" value="ECO:0007669"/>
    <property type="project" value="UniProtKB-UniRule"/>
</dbReference>
<dbReference type="GO" id="GO:0009229">
    <property type="term" value="P:thiamine diphosphate biosynthetic process"/>
    <property type="evidence" value="ECO:0007669"/>
    <property type="project" value="UniProtKB-UniRule"/>
</dbReference>
<dbReference type="GO" id="GO:0006772">
    <property type="term" value="P:thiamine metabolic process"/>
    <property type="evidence" value="ECO:0007669"/>
    <property type="project" value="InterPro"/>
</dbReference>
<dbReference type="Gene3D" id="3.90.1200.10">
    <property type="match status" value="1"/>
</dbReference>
<dbReference type="HAMAP" id="MF_01604">
    <property type="entry name" value="Thiamine_kinase"/>
    <property type="match status" value="1"/>
</dbReference>
<dbReference type="InterPro" id="IPR002575">
    <property type="entry name" value="Aminoglycoside_PTrfase"/>
</dbReference>
<dbReference type="InterPro" id="IPR011009">
    <property type="entry name" value="Kinase-like_dom_sf"/>
</dbReference>
<dbReference type="InterPro" id="IPR014093">
    <property type="entry name" value="Thiamine_kinase"/>
</dbReference>
<dbReference type="NCBIfam" id="NF007620">
    <property type="entry name" value="PRK10271.1"/>
    <property type="match status" value="1"/>
</dbReference>
<dbReference type="NCBIfam" id="TIGR02721">
    <property type="entry name" value="ycfN_thiK"/>
    <property type="match status" value="1"/>
</dbReference>
<dbReference type="Pfam" id="PF01636">
    <property type="entry name" value="APH"/>
    <property type="match status" value="1"/>
</dbReference>
<dbReference type="SUPFAM" id="SSF56112">
    <property type="entry name" value="Protein kinase-like (PK-like)"/>
    <property type="match status" value="1"/>
</dbReference>
<organism>
    <name type="scientific">Salmonella paratyphi C (strain RKS4594)</name>
    <dbReference type="NCBI Taxonomy" id="476213"/>
    <lineage>
        <taxon>Bacteria</taxon>
        <taxon>Pseudomonadati</taxon>
        <taxon>Pseudomonadota</taxon>
        <taxon>Gammaproteobacteria</taxon>
        <taxon>Enterobacterales</taxon>
        <taxon>Enterobacteriaceae</taxon>
        <taxon>Salmonella</taxon>
    </lineage>
</organism>
<protein>
    <recommendedName>
        <fullName evidence="1">Thiamine kinase</fullName>
        <ecNumber evidence="1">2.7.1.89</ecNumber>
    </recommendedName>
</protein>
<accession>C0Q785</accession>
<keyword id="KW-0067">ATP-binding</keyword>
<keyword id="KW-0418">Kinase</keyword>
<keyword id="KW-0547">Nucleotide-binding</keyword>
<keyword id="KW-0808">Transferase</keyword>
<feature type="chain" id="PRO_1000185832" description="Thiamine kinase">
    <location>
        <begin position="1"/>
        <end position="274"/>
    </location>
</feature>
<comment type="function">
    <text evidence="1">Catalyzes the ATP-dependent phosphorylation of thiamine to thiamine phosphate. Is involved in thiamine salvage.</text>
</comment>
<comment type="catalytic activity">
    <reaction evidence="1">
        <text>thiamine + ATP = thiamine phosphate + ADP + H(+)</text>
        <dbReference type="Rhea" id="RHEA:12012"/>
        <dbReference type="ChEBI" id="CHEBI:15378"/>
        <dbReference type="ChEBI" id="CHEBI:18385"/>
        <dbReference type="ChEBI" id="CHEBI:30616"/>
        <dbReference type="ChEBI" id="CHEBI:37575"/>
        <dbReference type="ChEBI" id="CHEBI:456216"/>
        <dbReference type="EC" id="2.7.1.89"/>
    </reaction>
    <physiologicalReaction direction="left-to-right" evidence="1">
        <dbReference type="Rhea" id="RHEA:12013"/>
    </physiologicalReaction>
</comment>
<comment type="pathway">
    <text evidence="1">Cofactor biosynthesis; thiamine diphosphate biosynthesis; thiamine phosphate from thiamine: step 1/1.</text>
</comment>
<comment type="similarity">
    <text evidence="1">Belongs to the thiamine kinase family.</text>
</comment>
<evidence type="ECO:0000255" key="1">
    <source>
        <dbReference type="HAMAP-Rule" id="MF_01604"/>
    </source>
</evidence>
<proteinExistence type="inferred from homology"/>
<name>THIK_SALPC</name>
<gene>
    <name evidence="1" type="primary">thiK</name>
    <name type="ordered locus">SPC_2538</name>
</gene>